<comment type="similarity">
    <text evidence="1">Belongs to the AB hydrolase superfamily. AB hydrolase 2 family.</text>
</comment>
<name>YE88_SCHPO</name>
<dbReference type="EC" id="3.1.-.-"/>
<dbReference type="EMBL" id="CU329670">
    <property type="protein sequence ID" value="CAB11492.1"/>
    <property type="molecule type" value="Genomic_DNA"/>
</dbReference>
<dbReference type="PIR" id="T39231">
    <property type="entry name" value="T39231"/>
</dbReference>
<dbReference type="RefSeq" id="NP_593563.1">
    <property type="nucleotide sequence ID" value="NM_001018996.2"/>
</dbReference>
<dbReference type="SMR" id="O14304"/>
<dbReference type="BioGRID" id="279236">
    <property type="interactions" value="18"/>
</dbReference>
<dbReference type="FunCoup" id="O14304">
    <property type="interactions" value="419"/>
</dbReference>
<dbReference type="STRING" id="284812.O14304"/>
<dbReference type="ESTHER" id="schpo-ye88">
    <property type="family name" value="LYsophospholipase_carboxylesterase"/>
</dbReference>
<dbReference type="PaxDb" id="4896-SPAC9G1.08c.1"/>
<dbReference type="EnsemblFungi" id="SPAC9G1.08c.1">
    <property type="protein sequence ID" value="SPAC9G1.08c.1:pep"/>
    <property type="gene ID" value="SPAC9G1.08c"/>
</dbReference>
<dbReference type="KEGG" id="spo:2542787"/>
<dbReference type="PomBase" id="SPAC9G1.08c"/>
<dbReference type="VEuPathDB" id="FungiDB:SPAC9G1.08c"/>
<dbReference type="eggNOG" id="KOG2112">
    <property type="taxonomic scope" value="Eukaryota"/>
</dbReference>
<dbReference type="HOGENOM" id="CLU_062889_1_0_1"/>
<dbReference type="InParanoid" id="O14304"/>
<dbReference type="OMA" id="NWMWGED"/>
<dbReference type="PhylomeDB" id="O14304"/>
<dbReference type="Reactome" id="R-SPO-203615">
    <property type="pathway name" value="eNOS activation"/>
</dbReference>
<dbReference type="Reactome" id="R-SPO-9648002">
    <property type="pathway name" value="RAS processing"/>
</dbReference>
<dbReference type="PRO" id="PR:O14304"/>
<dbReference type="Proteomes" id="UP000002485">
    <property type="component" value="Chromosome I"/>
</dbReference>
<dbReference type="GO" id="GO:0005737">
    <property type="term" value="C:cytoplasm"/>
    <property type="evidence" value="ECO:0000318"/>
    <property type="project" value="GO_Central"/>
</dbReference>
<dbReference type="GO" id="GO:0005829">
    <property type="term" value="C:cytosol"/>
    <property type="evidence" value="ECO:0007005"/>
    <property type="project" value="PomBase"/>
</dbReference>
<dbReference type="GO" id="GO:0005634">
    <property type="term" value="C:nucleus"/>
    <property type="evidence" value="ECO:0007005"/>
    <property type="project" value="PomBase"/>
</dbReference>
<dbReference type="GO" id="GO:0052689">
    <property type="term" value="F:carboxylic ester hydrolase activity"/>
    <property type="evidence" value="ECO:0000318"/>
    <property type="project" value="GO_Central"/>
</dbReference>
<dbReference type="GO" id="GO:0008474">
    <property type="term" value="F:palmitoyl-(protein) hydrolase activity"/>
    <property type="evidence" value="ECO:0000318"/>
    <property type="project" value="GO_Central"/>
</dbReference>
<dbReference type="Gene3D" id="3.40.50.1820">
    <property type="entry name" value="alpha/beta hydrolase"/>
    <property type="match status" value="1"/>
</dbReference>
<dbReference type="InterPro" id="IPR029058">
    <property type="entry name" value="AB_hydrolase_fold"/>
</dbReference>
<dbReference type="InterPro" id="IPR050565">
    <property type="entry name" value="LYPA1-2/EST-like"/>
</dbReference>
<dbReference type="InterPro" id="IPR003140">
    <property type="entry name" value="PLipase/COase/thioEstase"/>
</dbReference>
<dbReference type="PANTHER" id="PTHR10655">
    <property type="entry name" value="LYSOPHOSPHOLIPASE-RELATED"/>
    <property type="match status" value="1"/>
</dbReference>
<dbReference type="PANTHER" id="PTHR10655:SF67">
    <property type="entry name" value="PHOSPHOLIPASE_CARBOXYLESTERASE SUPERFAMILY (AFU_ORTHOLOGUE AFUA_5G09340)"/>
    <property type="match status" value="1"/>
</dbReference>
<dbReference type="Pfam" id="PF02230">
    <property type="entry name" value="Abhydrolase_2"/>
    <property type="match status" value="1"/>
</dbReference>
<dbReference type="SUPFAM" id="SSF53474">
    <property type="entry name" value="alpha/beta-Hydrolases"/>
    <property type="match status" value="1"/>
</dbReference>
<evidence type="ECO:0000305" key="1"/>
<feature type="chain" id="PRO_0000102279" description="Uncharacterized hydrolase C9G1.08c">
    <location>
        <begin position="1"/>
        <end position="241"/>
    </location>
</feature>
<gene>
    <name type="ORF">SPAC9G1.08c</name>
</gene>
<keyword id="KW-0378">Hydrolase</keyword>
<keyword id="KW-1185">Reference proteome</keyword>
<protein>
    <recommendedName>
        <fullName>Uncharacterized hydrolase C9G1.08c</fullName>
        <ecNumber>3.1.-.-</ecNumber>
    </recommendedName>
</protein>
<sequence>MSSLNSVLPSNACAEIIEGKDKVHNVVILMHGLGDSHKSFANMAKNVPLPNTSYISLRGPYRLPLDFENPGGNWMWGEDVHFDQNGELQSEADFSKSFTMISNLIGNLLSYGILSSRIFFFGFGQGAMVALYSCYKLSTKYQLGGIFSFGGTLPLSITLPNHPFHVPVYLFEKRLHCSCSEYEESRLRKTFKPFHLTCWNRDDKTDMPSSPREWYTFVQSISKHLYIHNTLFEDAIPLTSF</sequence>
<proteinExistence type="inferred from homology"/>
<accession>O14304</accession>
<reference key="1">
    <citation type="journal article" date="2002" name="Nature">
        <title>The genome sequence of Schizosaccharomyces pombe.</title>
        <authorList>
            <person name="Wood V."/>
            <person name="Gwilliam R."/>
            <person name="Rajandream M.A."/>
            <person name="Lyne M.H."/>
            <person name="Lyne R."/>
            <person name="Stewart A."/>
            <person name="Sgouros J.G."/>
            <person name="Peat N."/>
            <person name="Hayles J."/>
            <person name="Baker S.G."/>
            <person name="Basham D."/>
            <person name="Bowman S."/>
            <person name="Brooks K."/>
            <person name="Brown D."/>
            <person name="Brown S."/>
            <person name="Chillingworth T."/>
            <person name="Churcher C.M."/>
            <person name="Collins M."/>
            <person name="Connor R."/>
            <person name="Cronin A."/>
            <person name="Davis P."/>
            <person name="Feltwell T."/>
            <person name="Fraser A."/>
            <person name="Gentles S."/>
            <person name="Goble A."/>
            <person name="Hamlin N."/>
            <person name="Harris D.E."/>
            <person name="Hidalgo J."/>
            <person name="Hodgson G."/>
            <person name="Holroyd S."/>
            <person name="Hornsby T."/>
            <person name="Howarth S."/>
            <person name="Huckle E.J."/>
            <person name="Hunt S."/>
            <person name="Jagels K."/>
            <person name="James K.D."/>
            <person name="Jones L."/>
            <person name="Jones M."/>
            <person name="Leather S."/>
            <person name="McDonald S."/>
            <person name="McLean J."/>
            <person name="Mooney P."/>
            <person name="Moule S."/>
            <person name="Mungall K.L."/>
            <person name="Murphy L.D."/>
            <person name="Niblett D."/>
            <person name="Odell C."/>
            <person name="Oliver K."/>
            <person name="O'Neil S."/>
            <person name="Pearson D."/>
            <person name="Quail M.A."/>
            <person name="Rabbinowitsch E."/>
            <person name="Rutherford K.M."/>
            <person name="Rutter S."/>
            <person name="Saunders D."/>
            <person name="Seeger K."/>
            <person name="Sharp S."/>
            <person name="Skelton J."/>
            <person name="Simmonds M.N."/>
            <person name="Squares R."/>
            <person name="Squares S."/>
            <person name="Stevens K."/>
            <person name="Taylor K."/>
            <person name="Taylor R.G."/>
            <person name="Tivey A."/>
            <person name="Walsh S.V."/>
            <person name="Warren T."/>
            <person name="Whitehead S."/>
            <person name="Woodward J.R."/>
            <person name="Volckaert G."/>
            <person name="Aert R."/>
            <person name="Robben J."/>
            <person name="Grymonprez B."/>
            <person name="Weltjens I."/>
            <person name="Vanstreels E."/>
            <person name="Rieger M."/>
            <person name="Schaefer M."/>
            <person name="Mueller-Auer S."/>
            <person name="Gabel C."/>
            <person name="Fuchs M."/>
            <person name="Duesterhoeft A."/>
            <person name="Fritzc C."/>
            <person name="Holzer E."/>
            <person name="Moestl D."/>
            <person name="Hilbert H."/>
            <person name="Borzym K."/>
            <person name="Langer I."/>
            <person name="Beck A."/>
            <person name="Lehrach H."/>
            <person name="Reinhardt R."/>
            <person name="Pohl T.M."/>
            <person name="Eger P."/>
            <person name="Zimmermann W."/>
            <person name="Wedler H."/>
            <person name="Wambutt R."/>
            <person name="Purnelle B."/>
            <person name="Goffeau A."/>
            <person name="Cadieu E."/>
            <person name="Dreano S."/>
            <person name="Gloux S."/>
            <person name="Lelaure V."/>
            <person name="Mottier S."/>
            <person name="Galibert F."/>
            <person name="Aves S.J."/>
            <person name="Xiang Z."/>
            <person name="Hunt C."/>
            <person name="Moore K."/>
            <person name="Hurst S.M."/>
            <person name="Lucas M."/>
            <person name="Rochet M."/>
            <person name="Gaillardin C."/>
            <person name="Tallada V.A."/>
            <person name="Garzon A."/>
            <person name="Thode G."/>
            <person name="Daga R.R."/>
            <person name="Cruzado L."/>
            <person name="Jimenez J."/>
            <person name="Sanchez M."/>
            <person name="del Rey F."/>
            <person name="Benito J."/>
            <person name="Dominguez A."/>
            <person name="Revuelta J.L."/>
            <person name="Moreno S."/>
            <person name="Armstrong J."/>
            <person name="Forsburg S.L."/>
            <person name="Cerutti L."/>
            <person name="Lowe T."/>
            <person name="McCombie W.R."/>
            <person name="Paulsen I."/>
            <person name="Potashkin J."/>
            <person name="Shpakovski G.V."/>
            <person name="Ussery D."/>
            <person name="Barrell B.G."/>
            <person name="Nurse P."/>
        </authorList>
    </citation>
    <scope>NUCLEOTIDE SEQUENCE [LARGE SCALE GENOMIC DNA]</scope>
    <source>
        <strain>972 / ATCC 24843</strain>
    </source>
</reference>
<organism>
    <name type="scientific">Schizosaccharomyces pombe (strain 972 / ATCC 24843)</name>
    <name type="common">Fission yeast</name>
    <dbReference type="NCBI Taxonomy" id="284812"/>
    <lineage>
        <taxon>Eukaryota</taxon>
        <taxon>Fungi</taxon>
        <taxon>Dikarya</taxon>
        <taxon>Ascomycota</taxon>
        <taxon>Taphrinomycotina</taxon>
        <taxon>Schizosaccharomycetes</taxon>
        <taxon>Schizosaccharomycetales</taxon>
        <taxon>Schizosaccharomycetaceae</taxon>
        <taxon>Schizosaccharomyces</taxon>
    </lineage>
</organism>